<gene>
    <name evidence="1" type="primary">dapE</name>
    <name type="ordered locus">CJJ81176_1069</name>
</gene>
<keyword id="KW-0028">Amino-acid biosynthesis</keyword>
<keyword id="KW-0170">Cobalt</keyword>
<keyword id="KW-0220">Diaminopimelate biosynthesis</keyword>
<keyword id="KW-0378">Hydrolase</keyword>
<keyword id="KW-0457">Lysine biosynthesis</keyword>
<keyword id="KW-0479">Metal-binding</keyword>
<keyword id="KW-0862">Zinc</keyword>
<organism>
    <name type="scientific">Campylobacter jejuni subsp. jejuni serotype O:23/36 (strain 81-176)</name>
    <dbReference type="NCBI Taxonomy" id="354242"/>
    <lineage>
        <taxon>Bacteria</taxon>
        <taxon>Pseudomonadati</taxon>
        <taxon>Campylobacterota</taxon>
        <taxon>Epsilonproteobacteria</taxon>
        <taxon>Campylobacterales</taxon>
        <taxon>Campylobacteraceae</taxon>
        <taxon>Campylobacter</taxon>
    </lineage>
</organism>
<sequence length="365" mass="40557">MNAKEFLIELLKFKSVTPNDDGALNFIAMELSDFEAFFIEKEGIKNLLLTKKFKDEGEHLAFGGHVDVVPAGEGWSNNAFAPVEKEGFIYARGAQDMKSGVAAFVDAVKNADFKGARLSLILTSDEEGEAIYGTKAVLEWMQERDMLPDYAVVAEPTCVKKIGDSIKIGRRGSINGKLLIRGKQGHVAYPEKCINPVHDFAPVLKLLAGFDLDPGSAEFSPSKIVITDIRGGMEVCNVTPNDLKLMFNVRNSPDTSLEDVKSYVEKICHGLNYELELKQSSEAFLTNIDNKIVQKMNESVQKITHEVPELNTKGGTSDARYFAKYGVKVVEFGVCNDRIHAIDERVSIEEFEKLCLVFKDLIENF</sequence>
<reference key="1">
    <citation type="submission" date="2006-12" db="EMBL/GenBank/DDBJ databases">
        <authorList>
            <person name="Fouts D.E."/>
            <person name="Nelson K.E."/>
            <person name="Sebastian Y."/>
        </authorList>
    </citation>
    <scope>NUCLEOTIDE SEQUENCE [LARGE SCALE GENOMIC DNA]</scope>
    <source>
        <strain>81-176</strain>
    </source>
</reference>
<name>DAPE_CAMJJ</name>
<accession>A1W038</accession>
<dbReference type="EC" id="3.5.1.18" evidence="1"/>
<dbReference type="EMBL" id="CP000538">
    <property type="protein sequence ID" value="EAQ72241.1"/>
    <property type="molecule type" value="Genomic_DNA"/>
</dbReference>
<dbReference type="RefSeq" id="WP_002869118.1">
    <property type="nucleotide sequence ID" value="NC_008787.1"/>
</dbReference>
<dbReference type="SMR" id="A1W038"/>
<dbReference type="KEGG" id="cjj:CJJ81176_1069"/>
<dbReference type="eggNOG" id="COG0624">
    <property type="taxonomic scope" value="Bacteria"/>
</dbReference>
<dbReference type="HOGENOM" id="CLU_021802_4_0_7"/>
<dbReference type="UniPathway" id="UPA00034">
    <property type="reaction ID" value="UER00021"/>
</dbReference>
<dbReference type="Proteomes" id="UP000000646">
    <property type="component" value="Chromosome"/>
</dbReference>
<dbReference type="GO" id="GO:0008777">
    <property type="term" value="F:acetylornithine deacetylase activity"/>
    <property type="evidence" value="ECO:0007669"/>
    <property type="project" value="TreeGrafter"/>
</dbReference>
<dbReference type="GO" id="GO:0046872">
    <property type="term" value="F:metal ion binding"/>
    <property type="evidence" value="ECO:0007669"/>
    <property type="project" value="UniProtKB-KW"/>
</dbReference>
<dbReference type="GO" id="GO:0009014">
    <property type="term" value="F:succinyl-diaminopimelate desuccinylase activity"/>
    <property type="evidence" value="ECO:0007669"/>
    <property type="project" value="UniProtKB-EC"/>
</dbReference>
<dbReference type="GO" id="GO:0019877">
    <property type="term" value="P:diaminopimelate biosynthetic process"/>
    <property type="evidence" value="ECO:0007669"/>
    <property type="project" value="UniProtKB-KW"/>
</dbReference>
<dbReference type="GO" id="GO:0006526">
    <property type="term" value="P:L-arginine biosynthetic process"/>
    <property type="evidence" value="ECO:0007669"/>
    <property type="project" value="TreeGrafter"/>
</dbReference>
<dbReference type="GO" id="GO:0009089">
    <property type="term" value="P:lysine biosynthetic process via diaminopimelate"/>
    <property type="evidence" value="ECO:0007669"/>
    <property type="project" value="UniProtKB-UniPathway"/>
</dbReference>
<dbReference type="CDD" id="cd03891">
    <property type="entry name" value="M20_DapE_proteobac"/>
    <property type="match status" value="1"/>
</dbReference>
<dbReference type="Gene3D" id="1.10.150.900">
    <property type="match status" value="1"/>
</dbReference>
<dbReference type="Gene3D" id="3.30.70.360">
    <property type="match status" value="1"/>
</dbReference>
<dbReference type="Gene3D" id="3.40.630.10">
    <property type="entry name" value="Zn peptidases"/>
    <property type="match status" value="1"/>
</dbReference>
<dbReference type="HAMAP" id="MF_01690">
    <property type="entry name" value="DapE"/>
    <property type="match status" value="1"/>
</dbReference>
<dbReference type="InterPro" id="IPR001261">
    <property type="entry name" value="ArgE/DapE_CS"/>
</dbReference>
<dbReference type="InterPro" id="IPR036264">
    <property type="entry name" value="Bact_exopeptidase_dim_dom"/>
</dbReference>
<dbReference type="InterPro" id="IPR005941">
    <property type="entry name" value="DapE_proteobac"/>
</dbReference>
<dbReference type="InterPro" id="IPR002933">
    <property type="entry name" value="Peptidase_M20"/>
</dbReference>
<dbReference type="InterPro" id="IPR011650">
    <property type="entry name" value="Peptidase_M20_dimer"/>
</dbReference>
<dbReference type="InterPro" id="IPR050072">
    <property type="entry name" value="Peptidase_M20A"/>
</dbReference>
<dbReference type="NCBIfam" id="TIGR01246">
    <property type="entry name" value="dapE_proteo"/>
    <property type="match status" value="1"/>
</dbReference>
<dbReference type="NCBIfam" id="NF009557">
    <property type="entry name" value="PRK13009.1"/>
    <property type="match status" value="1"/>
</dbReference>
<dbReference type="PANTHER" id="PTHR43808">
    <property type="entry name" value="ACETYLORNITHINE DEACETYLASE"/>
    <property type="match status" value="1"/>
</dbReference>
<dbReference type="PANTHER" id="PTHR43808:SF31">
    <property type="entry name" value="N-ACETYL-L-CITRULLINE DEACETYLASE"/>
    <property type="match status" value="1"/>
</dbReference>
<dbReference type="Pfam" id="PF07687">
    <property type="entry name" value="M20_dimer"/>
    <property type="match status" value="1"/>
</dbReference>
<dbReference type="Pfam" id="PF01546">
    <property type="entry name" value="Peptidase_M20"/>
    <property type="match status" value="1"/>
</dbReference>
<dbReference type="SUPFAM" id="SSF55031">
    <property type="entry name" value="Bacterial exopeptidase dimerisation domain"/>
    <property type="match status" value="1"/>
</dbReference>
<dbReference type="SUPFAM" id="SSF53187">
    <property type="entry name" value="Zn-dependent exopeptidases"/>
    <property type="match status" value="1"/>
</dbReference>
<dbReference type="PROSITE" id="PS00758">
    <property type="entry name" value="ARGE_DAPE_CPG2_1"/>
    <property type="match status" value="1"/>
</dbReference>
<dbReference type="PROSITE" id="PS00759">
    <property type="entry name" value="ARGE_DAPE_CPG2_2"/>
    <property type="match status" value="1"/>
</dbReference>
<evidence type="ECO:0000255" key="1">
    <source>
        <dbReference type="HAMAP-Rule" id="MF_01690"/>
    </source>
</evidence>
<comment type="function">
    <text evidence="1">Catalyzes the hydrolysis of N-succinyl-L,L-diaminopimelic acid (SDAP), forming succinate and LL-2,6-diaminopimelate (DAP), an intermediate involved in the bacterial biosynthesis of lysine and meso-diaminopimelic acid, an essential component of bacterial cell walls.</text>
</comment>
<comment type="catalytic activity">
    <reaction evidence="1">
        <text>N-succinyl-(2S,6S)-2,6-diaminopimelate + H2O = (2S,6S)-2,6-diaminopimelate + succinate</text>
        <dbReference type="Rhea" id="RHEA:22608"/>
        <dbReference type="ChEBI" id="CHEBI:15377"/>
        <dbReference type="ChEBI" id="CHEBI:30031"/>
        <dbReference type="ChEBI" id="CHEBI:57609"/>
        <dbReference type="ChEBI" id="CHEBI:58087"/>
        <dbReference type="EC" id="3.5.1.18"/>
    </reaction>
</comment>
<comment type="cofactor">
    <cofactor evidence="1">
        <name>Zn(2+)</name>
        <dbReference type="ChEBI" id="CHEBI:29105"/>
    </cofactor>
    <cofactor evidence="1">
        <name>Co(2+)</name>
        <dbReference type="ChEBI" id="CHEBI:48828"/>
    </cofactor>
    <text evidence="1">Binds 2 Zn(2+) or Co(2+) ions per subunit.</text>
</comment>
<comment type="pathway">
    <text evidence="1">Amino-acid biosynthesis; L-lysine biosynthesis via DAP pathway; LL-2,6-diaminopimelate from (S)-tetrahydrodipicolinate (succinylase route): step 3/3.</text>
</comment>
<comment type="subunit">
    <text evidence="1">Homodimer.</text>
</comment>
<comment type="similarity">
    <text evidence="1">Belongs to the peptidase M20A family. DapE subfamily.</text>
</comment>
<protein>
    <recommendedName>
        <fullName evidence="1">Succinyl-diaminopimelate desuccinylase</fullName>
        <shortName evidence="1">SDAP desuccinylase</shortName>
        <ecNumber evidence="1">3.5.1.18</ecNumber>
    </recommendedName>
    <alternativeName>
        <fullName evidence="1">N-succinyl-LL-2,6-diaminoheptanedioate amidohydrolase</fullName>
    </alternativeName>
</protein>
<feature type="chain" id="PRO_0000375523" description="Succinyl-diaminopimelate desuccinylase">
    <location>
        <begin position="1"/>
        <end position="365"/>
    </location>
</feature>
<feature type="active site" evidence="1">
    <location>
        <position position="67"/>
    </location>
</feature>
<feature type="active site" description="Proton acceptor" evidence="1">
    <location>
        <position position="126"/>
    </location>
</feature>
<feature type="binding site" evidence="1">
    <location>
        <position position="65"/>
    </location>
    <ligand>
        <name>Zn(2+)</name>
        <dbReference type="ChEBI" id="CHEBI:29105"/>
        <label>1</label>
    </ligand>
</feature>
<feature type="binding site" evidence="1">
    <location>
        <position position="96"/>
    </location>
    <ligand>
        <name>Zn(2+)</name>
        <dbReference type="ChEBI" id="CHEBI:29105"/>
        <label>1</label>
    </ligand>
</feature>
<feature type="binding site" evidence="1">
    <location>
        <position position="96"/>
    </location>
    <ligand>
        <name>Zn(2+)</name>
        <dbReference type="ChEBI" id="CHEBI:29105"/>
        <label>2</label>
    </ligand>
</feature>
<feature type="binding site" evidence="1">
    <location>
        <position position="127"/>
    </location>
    <ligand>
        <name>Zn(2+)</name>
        <dbReference type="ChEBI" id="CHEBI:29105"/>
        <label>2</label>
    </ligand>
</feature>
<feature type="binding site" evidence="1">
    <location>
        <position position="155"/>
    </location>
    <ligand>
        <name>Zn(2+)</name>
        <dbReference type="ChEBI" id="CHEBI:29105"/>
        <label>1</label>
    </ligand>
</feature>
<feature type="binding site" evidence="1">
    <location>
        <position position="340"/>
    </location>
    <ligand>
        <name>Zn(2+)</name>
        <dbReference type="ChEBI" id="CHEBI:29105"/>
        <label>2</label>
    </ligand>
</feature>
<proteinExistence type="inferred from homology"/>